<proteinExistence type="inferred from homology"/>
<sequence length="77" mass="8239">MNRTKLVLGAVILGSHSAGCSSNAKIDQLSSDVQTLNAKVDQLSNDVNAMRSDVQAAKDDAARANQRLDNQAHAYKK</sequence>
<dbReference type="EMBL" id="V01348">
    <property type="protein sequence ID" value="CAA24640.1"/>
    <property type="molecule type" value="Genomic_DNA"/>
</dbReference>
<dbReference type="EMBL" id="AH000933">
    <property type="protein sequence ID" value="AAA26566.1"/>
    <property type="molecule type" value="Genomic_DNA"/>
</dbReference>
<dbReference type="PIR" id="A03438">
    <property type="entry name" value="LPSEW"/>
</dbReference>
<dbReference type="SMR" id="P02938"/>
<dbReference type="STRING" id="273526.SMDB11_1460"/>
<dbReference type="GO" id="GO:0009279">
    <property type="term" value="C:cell outer membrane"/>
    <property type="evidence" value="ECO:0007669"/>
    <property type="project" value="UniProtKB-SubCell"/>
</dbReference>
<dbReference type="GO" id="GO:0005576">
    <property type="term" value="C:extracellular region"/>
    <property type="evidence" value="ECO:0007669"/>
    <property type="project" value="UniProtKB-KW"/>
</dbReference>
<dbReference type="GO" id="GO:0008289">
    <property type="term" value="F:lipid binding"/>
    <property type="evidence" value="ECO:0007669"/>
    <property type="project" value="UniProtKB-UniRule"/>
</dbReference>
<dbReference type="GO" id="GO:0042834">
    <property type="term" value="F:peptidoglycan binding"/>
    <property type="evidence" value="ECO:0007669"/>
    <property type="project" value="UniProtKB-UniRule"/>
</dbReference>
<dbReference type="GO" id="GO:0030258">
    <property type="term" value="P:lipid modification"/>
    <property type="evidence" value="ECO:0007669"/>
    <property type="project" value="UniProtKB-UniRule"/>
</dbReference>
<dbReference type="GO" id="GO:0043580">
    <property type="term" value="P:periplasmic space organization"/>
    <property type="evidence" value="ECO:0007669"/>
    <property type="project" value="UniProtKB-UniRule"/>
</dbReference>
<dbReference type="FunFam" id="1.20.5.190:FF:000002">
    <property type="entry name" value="Major outer membrane lipoprotein"/>
    <property type="match status" value="1"/>
</dbReference>
<dbReference type="Gene3D" id="1.20.5.190">
    <property type="match status" value="1"/>
</dbReference>
<dbReference type="HAMAP" id="MF_00843">
    <property type="entry name" value="Lpp"/>
    <property type="match status" value="1"/>
</dbReference>
<dbReference type="InterPro" id="IPR006817">
    <property type="entry name" value="Lipoprotein_leucine-zipper_dom"/>
</dbReference>
<dbReference type="InterPro" id="IPR016367">
    <property type="entry name" value="MOM_Lpp"/>
</dbReference>
<dbReference type="NCBIfam" id="NF011925">
    <property type="entry name" value="PRK15396.1"/>
    <property type="match status" value="1"/>
</dbReference>
<dbReference type="PANTHER" id="PTHR38763:SF1">
    <property type="entry name" value="MAJOR OUTER MEMBRANE LIPOPROTEIN LPP"/>
    <property type="match status" value="1"/>
</dbReference>
<dbReference type="PANTHER" id="PTHR38763">
    <property type="entry name" value="MAJOR OUTER MEMBRANE PROLIPOPROTEIN LPP"/>
    <property type="match status" value="1"/>
</dbReference>
<dbReference type="Pfam" id="PF04728">
    <property type="entry name" value="LPP"/>
    <property type="match status" value="1"/>
</dbReference>
<dbReference type="PIRSF" id="PIRSF002855">
    <property type="entry name" value="Murein-lipoprotein"/>
    <property type="match status" value="1"/>
</dbReference>
<dbReference type="SUPFAM" id="SSF58042">
    <property type="entry name" value="Outer membrane lipoprotein"/>
    <property type="match status" value="1"/>
</dbReference>
<protein>
    <recommendedName>
        <fullName evidence="1">Major outer membrane lipoprotein Lpp</fullName>
    </recommendedName>
</protein>
<name>LPP_SERMA</name>
<accession>P02938</accession>
<keyword id="KW-0998">Cell outer membrane</keyword>
<keyword id="KW-0134">Cell wall</keyword>
<keyword id="KW-0175">Coiled coil</keyword>
<keyword id="KW-0449">Lipoprotein</keyword>
<keyword id="KW-0472">Membrane</keyword>
<keyword id="KW-0564">Palmitate</keyword>
<keyword id="KW-0572">Peptidoglycan-anchor</keyword>
<keyword id="KW-0677">Repeat</keyword>
<keyword id="KW-0964">Secreted</keyword>
<keyword id="KW-0732">Signal</keyword>
<feature type="signal peptide" evidence="3">
    <location>
        <begin position="1"/>
        <end position="19"/>
    </location>
</feature>
<feature type="chain" id="PRO_0000018346" description="Major outer membrane lipoprotein Lpp">
    <location>
        <begin position="20"/>
        <end position="77"/>
    </location>
</feature>
<feature type="repeat" evidence="1">
    <location>
        <begin position="23"/>
        <end position="33"/>
    </location>
</feature>
<feature type="repeat" evidence="1">
    <location>
        <begin position="37"/>
        <end position="47"/>
    </location>
</feature>
<feature type="region of interest" description="Disordered" evidence="2">
    <location>
        <begin position="56"/>
        <end position="77"/>
    </location>
</feature>
<feature type="coiled-coil region" evidence="1">
    <location>
        <begin position="26"/>
        <end position="74"/>
    </location>
</feature>
<feature type="modified residue" description="N6-murein peptidoglycan lysine" evidence="1">
    <location>
        <position position="77"/>
    </location>
</feature>
<feature type="lipid moiety-binding region" description="N-palmitoyl cysteine" evidence="1">
    <location>
        <position position="20"/>
    </location>
</feature>
<feature type="lipid moiety-binding region" description="S-diacylglycerol cysteine" evidence="1">
    <location>
        <position position="20"/>
    </location>
</feature>
<organism>
    <name type="scientific">Serratia marcescens</name>
    <dbReference type="NCBI Taxonomy" id="615"/>
    <lineage>
        <taxon>Bacteria</taxon>
        <taxon>Pseudomonadati</taxon>
        <taxon>Pseudomonadota</taxon>
        <taxon>Gammaproteobacteria</taxon>
        <taxon>Enterobacterales</taxon>
        <taxon>Yersiniaceae</taxon>
        <taxon>Serratia</taxon>
    </lineage>
</organism>
<evidence type="ECO:0000255" key="1">
    <source>
        <dbReference type="HAMAP-Rule" id="MF_00843"/>
    </source>
</evidence>
<evidence type="ECO:0000256" key="2">
    <source>
        <dbReference type="SAM" id="MobiDB-lite"/>
    </source>
</evidence>
<evidence type="ECO:0000305" key="3"/>
<gene>
    <name evidence="1" type="primary">lpp</name>
</gene>
<comment type="function">
    <text evidence="1">A highly abundant outer membrane lipoprotein that controls the distance between the inner and outer membranes. The only protein known to be covalently linked to the peptidoglycan network (PGN). Also non-covalently binds the PGN. The link between the cell outer membrane and PGN contributes to maintenance of the structural and functional integrity of the cell envelope, and maintains the correct distance between the PGN and the outer membrane.</text>
</comment>
<comment type="subunit">
    <text evidence="1">Homotrimer.</text>
</comment>
<comment type="subcellular location">
    <subcellularLocation>
        <location evidence="1">Cell outer membrane</location>
        <topology evidence="1">Lipid-anchor</topology>
        <orientation evidence="1">Periplasmic side</orientation>
    </subcellularLocation>
    <subcellularLocation>
        <location evidence="1">Secreted</location>
        <location evidence="1">Cell wall</location>
        <topology evidence="1">Peptidoglycan-anchor</topology>
    </subcellularLocation>
    <text evidence="1">Attached via its lipidated N-terminus to the inner leaflet of the outer membrane. Attached to the peptidoglycan network (PGN) via its C-terminus.</text>
</comment>
<comment type="similarity">
    <text evidence="1">Belongs to the Lpp family.</text>
</comment>
<reference key="1">
    <citation type="journal article" date="1980" name="Proc. Natl. Acad. Sci. U.S.A.">
        <title>DNA sequence of the Serratia marcescens lipoprotein gene.</title>
        <authorList>
            <person name="Nakamura K."/>
            <person name="Inouye M."/>
        </authorList>
    </citation>
    <scope>NUCLEOTIDE SEQUENCE [GENOMIC DNA]</scope>
</reference>